<accession>Q3Z1R5</accession>
<organism>
    <name type="scientific">Shigella sonnei (strain Ss046)</name>
    <dbReference type="NCBI Taxonomy" id="300269"/>
    <lineage>
        <taxon>Bacteria</taxon>
        <taxon>Pseudomonadati</taxon>
        <taxon>Pseudomonadota</taxon>
        <taxon>Gammaproteobacteria</taxon>
        <taxon>Enterobacterales</taxon>
        <taxon>Enterobacteriaceae</taxon>
        <taxon>Shigella</taxon>
    </lineage>
</organism>
<keyword id="KW-0997">Cell inner membrane</keyword>
<keyword id="KW-1003">Cell membrane</keyword>
<keyword id="KW-0472">Membrane</keyword>
<keyword id="KW-1185">Reference proteome</keyword>
<keyword id="KW-0812">Transmembrane</keyword>
<keyword id="KW-1133">Transmembrane helix</keyword>
<dbReference type="EMBL" id="CP000038">
    <property type="protein sequence ID" value="AAZ88297.1"/>
    <property type="molecule type" value="Genomic_DNA"/>
</dbReference>
<dbReference type="RefSeq" id="WP_000885033.1">
    <property type="nucleotide sequence ID" value="NC_007384.1"/>
</dbReference>
<dbReference type="GeneID" id="93775693"/>
<dbReference type="KEGG" id="ssn:SSON_1599"/>
<dbReference type="HOGENOM" id="CLU_079909_2_0_6"/>
<dbReference type="Proteomes" id="UP000002529">
    <property type="component" value="Chromosome"/>
</dbReference>
<dbReference type="GO" id="GO:0005886">
    <property type="term" value="C:plasma membrane"/>
    <property type="evidence" value="ECO:0007669"/>
    <property type="project" value="UniProtKB-SubCell"/>
</dbReference>
<dbReference type="InterPro" id="IPR002771">
    <property type="entry name" value="Multi_antbiot-R_MarC"/>
</dbReference>
<dbReference type="NCBIfam" id="TIGR00427">
    <property type="entry name" value="NAAT family transporter"/>
    <property type="match status" value="1"/>
</dbReference>
<dbReference type="NCBIfam" id="NF008228">
    <property type="entry name" value="PRK10995.1"/>
    <property type="match status" value="1"/>
</dbReference>
<dbReference type="PANTHER" id="PTHR33508:SF2">
    <property type="entry name" value="UPF0056 INNER MEMBRANE PROTEIN MARC"/>
    <property type="match status" value="1"/>
</dbReference>
<dbReference type="PANTHER" id="PTHR33508">
    <property type="entry name" value="UPF0056 MEMBRANE PROTEIN YHCE"/>
    <property type="match status" value="1"/>
</dbReference>
<dbReference type="Pfam" id="PF01914">
    <property type="entry name" value="MarC"/>
    <property type="match status" value="1"/>
</dbReference>
<protein>
    <recommendedName>
        <fullName>UPF0056 inner membrane protein MarC</fullName>
    </recommendedName>
</protein>
<sequence length="221" mass="23617">MLDLFKAIGLGLVVLLPLANPLTTVALFLGLAGNMNSAERNRQSLMASVYVFAIMMVAYYAGQLVMDTFGISIPGLRIAGGLIVAFIGFRMLFPQQKAIDSPEAKSKSEELEDEPSANIAFVPLAMPSTAGPGTIAMIISSASTVRQSSTFADWVLMVAPPLIFFLVAVILWGSLRSSGAIMRLVGKGGIEAISRLMGFLLVCMGVQFIINGILEIIKTYH</sequence>
<name>MARC_SHISS</name>
<feature type="chain" id="PRO_0000343829" description="UPF0056 inner membrane protein MarC">
    <location>
        <begin position="1"/>
        <end position="221"/>
    </location>
</feature>
<feature type="topological domain" description="Periplasmic" evidence="2">
    <location>
        <begin position="1"/>
        <end position="7"/>
    </location>
</feature>
<feature type="transmembrane region" description="Helical" evidence="2">
    <location>
        <begin position="8"/>
        <end position="28"/>
    </location>
</feature>
<feature type="topological domain" description="Cytoplasmic" evidence="2">
    <location>
        <begin position="29"/>
        <end position="44"/>
    </location>
</feature>
<feature type="transmembrane region" description="Helical" evidence="2">
    <location>
        <begin position="45"/>
        <end position="65"/>
    </location>
</feature>
<feature type="topological domain" description="Periplasmic" evidence="2">
    <location>
        <begin position="66"/>
        <end position="68"/>
    </location>
</feature>
<feature type="transmembrane region" description="Helical" evidence="2">
    <location>
        <begin position="69"/>
        <end position="89"/>
    </location>
</feature>
<feature type="topological domain" description="Cytoplasmic" evidence="2">
    <location>
        <begin position="90"/>
        <end position="118"/>
    </location>
</feature>
<feature type="transmembrane region" description="Helical" evidence="2">
    <location>
        <begin position="119"/>
        <end position="139"/>
    </location>
</feature>
<feature type="topological domain" description="Periplasmic" evidence="2">
    <location>
        <begin position="140"/>
        <end position="154"/>
    </location>
</feature>
<feature type="transmembrane region" description="Helical" evidence="2">
    <location>
        <begin position="155"/>
        <end position="175"/>
    </location>
</feature>
<feature type="topological domain" description="Cytoplasmic" evidence="2">
    <location>
        <begin position="176"/>
        <end position="196"/>
    </location>
</feature>
<feature type="transmembrane region" description="Helical" evidence="2">
    <location>
        <begin position="197"/>
        <end position="217"/>
    </location>
</feature>
<feature type="topological domain" description="Periplasmic" evidence="2">
    <location>
        <begin position="218"/>
        <end position="221"/>
    </location>
</feature>
<comment type="subcellular location">
    <subcellularLocation>
        <location evidence="1">Cell inner membrane</location>
        <topology evidence="1">Multi-pass membrane protein</topology>
    </subcellularLocation>
</comment>
<comment type="similarity">
    <text evidence="3">Belongs to the UPF0056 (MarC) family.</text>
</comment>
<proteinExistence type="inferred from homology"/>
<reference key="1">
    <citation type="journal article" date="2005" name="Nucleic Acids Res.">
        <title>Genome dynamics and diversity of Shigella species, the etiologic agents of bacillary dysentery.</title>
        <authorList>
            <person name="Yang F."/>
            <person name="Yang J."/>
            <person name="Zhang X."/>
            <person name="Chen L."/>
            <person name="Jiang Y."/>
            <person name="Yan Y."/>
            <person name="Tang X."/>
            <person name="Wang J."/>
            <person name="Xiong Z."/>
            <person name="Dong J."/>
            <person name="Xue Y."/>
            <person name="Zhu Y."/>
            <person name="Xu X."/>
            <person name="Sun L."/>
            <person name="Chen S."/>
            <person name="Nie H."/>
            <person name="Peng J."/>
            <person name="Xu J."/>
            <person name="Wang Y."/>
            <person name="Yuan Z."/>
            <person name="Wen Y."/>
            <person name="Yao Z."/>
            <person name="Shen Y."/>
            <person name="Qiang B."/>
            <person name="Hou Y."/>
            <person name="Yu J."/>
            <person name="Jin Q."/>
        </authorList>
    </citation>
    <scope>NUCLEOTIDE SEQUENCE [LARGE SCALE GENOMIC DNA]</scope>
    <source>
        <strain>Ss046</strain>
    </source>
</reference>
<gene>
    <name type="primary">marC</name>
    <name type="ordered locus">SSON_1599</name>
</gene>
<evidence type="ECO:0000250" key="1"/>
<evidence type="ECO:0000255" key="2"/>
<evidence type="ECO:0000305" key="3"/>